<gene>
    <name evidence="11" type="primary">FAP7</name>
    <name type="ordered locus">YDL166C</name>
</gene>
<protein>
    <recommendedName>
        <fullName evidence="1">Adenylate kinase isoenzyme 6 homolog FAP7</fullName>
        <shortName evidence="1">AK6</shortName>
        <ecNumber evidence="1">2.7.4.3</ecNumber>
    </recommendedName>
    <alternativeName>
        <fullName evidence="1">Dual activity adenylate kinase/ATPase</fullName>
        <shortName evidence="1">AK/ATPase</shortName>
    </alternativeName>
    <alternativeName>
        <fullName evidence="11">POS9-activating factor 7</fullName>
    </alternativeName>
</protein>
<sequence length="197" mass="22723">MEARRYGPNIIVTGTPGCGKSSTCEFLKNKLKDYKYYNISDFAKDNDCFEGYDEGRKSHIVDEDKLLDMLEPLLRQGNSIVDWHVNDVFPERLIDLVVVLRCDNSNLYSRLHARGYHDSKIEENLDAEIMGVVKQDAVESYEPHIVVELQSDTKEDMVSNVSRIVAWEKMWLEQHPDGVTNEYQGPRSDDEDDEDSE</sequence>
<keyword id="KW-0067">ATP-binding</keyword>
<keyword id="KW-0963">Cytoplasm</keyword>
<keyword id="KW-0418">Kinase</keyword>
<keyword id="KW-0547">Nucleotide-binding</keyword>
<keyword id="KW-0539">Nucleus</keyword>
<keyword id="KW-0597">Phosphoprotein</keyword>
<keyword id="KW-1185">Reference proteome</keyword>
<keyword id="KW-0690">Ribosome biogenesis</keyword>
<keyword id="KW-0698">rRNA processing</keyword>
<keyword id="KW-0808">Transferase</keyword>
<reference key="1">
    <citation type="journal article" date="1997" name="Nature">
        <title>The nucleotide sequence of Saccharomyces cerevisiae chromosome IV.</title>
        <authorList>
            <person name="Jacq C."/>
            <person name="Alt-Moerbe J."/>
            <person name="Andre B."/>
            <person name="Arnold W."/>
            <person name="Bahr A."/>
            <person name="Ballesta J.P.G."/>
            <person name="Bargues M."/>
            <person name="Baron L."/>
            <person name="Becker A."/>
            <person name="Biteau N."/>
            <person name="Bloecker H."/>
            <person name="Blugeon C."/>
            <person name="Boskovic J."/>
            <person name="Brandt P."/>
            <person name="Brueckner M."/>
            <person name="Buitrago M.J."/>
            <person name="Coster F."/>
            <person name="Delaveau T."/>
            <person name="del Rey F."/>
            <person name="Dujon B."/>
            <person name="Eide L.G."/>
            <person name="Garcia-Cantalejo J.M."/>
            <person name="Goffeau A."/>
            <person name="Gomez-Peris A."/>
            <person name="Granotier C."/>
            <person name="Hanemann V."/>
            <person name="Hankeln T."/>
            <person name="Hoheisel J.D."/>
            <person name="Jaeger W."/>
            <person name="Jimenez A."/>
            <person name="Jonniaux J.-L."/>
            <person name="Kraemer C."/>
            <person name="Kuester H."/>
            <person name="Laamanen P."/>
            <person name="Legros Y."/>
            <person name="Louis E.J."/>
            <person name="Moeller-Rieker S."/>
            <person name="Monnet A."/>
            <person name="Moro M."/>
            <person name="Mueller-Auer S."/>
            <person name="Nussbaumer B."/>
            <person name="Paricio N."/>
            <person name="Paulin L."/>
            <person name="Perea J."/>
            <person name="Perez-Alonso M."/>
            <person name="Perez-Ortin J.E."/>
            <person name="Pohl T.M."/>
            <person name="Prydz H."/>
            <person name="Purnelle B."/>
            <person name="Rasmussen S.W."/>
            <person name="Remacha M.A."/>
            <person name="Revuelta J.L."/>
            <person name="Rieger M."/>
            <person name="Salom D."/>
            <person name="Saluz H.P."/>
            <person name="Saiz J.E."/>
            <person name="Saren A.-M."/>
            <person name="Schaefer M."/>
            <person name="Scharfe M."/>
            <person name="Schmidt E.R."/>
            <person name="Schneider C."/>
            <person name="Scholler P."/>
            <person name="Schwarz S."/>
            <person name="Soler-Mira A."/>
            <person name="Urrestarazu L.A."/>
            <person name="Verhasselt P."/>
            <person name="Vissers S."/>
            <person name="Voet M."/>
            <person name="Volckaert G."/>
            <person name="Wagner G."/>
            <person name="Wambutt R."/>
            <person name="Wedler E."/>
            <person name="Wedler H."/>
            <person name="Woelfl S."/>
            <person name="Harris D.E."/>
            <person name="Bowman S."/>
            <person name="Brown D."/>
            <person name="Churcher C.M."/>
            <person name="Connor R."/>
            <person name="Dedman K."/>
            <person name="Gentles S."/>
            <person name="Hamlin N."/>
            <person name="Hunt S."/>
            <person name="Jones L."/>
            <person name="McDonald S."/>
            <person name="Murphy L.D."/>
            <person name="Niblett D."/>
            <person name="Odell C."/>
            <person name="Oliver K."/>
            <person name="Rajandream M.A."/>
            <person name="Richards C."/>
            <person name="Shore L."/>
            <person name="Walsh S.V."/>
            <person name="Barrell B.G."/>
            <person name="Dietrich F.S."/>
            <person name="Mulligan J.T."/>
            <person name="Allen E."/>
            <person name="Araujo R."/>
            <person name="Aviles E."/>
            <person name="Berno A."/>
            <person name="Carpenter J."/>
            <person name="Chen E."/>
            <person name="Cherry J.M."/>
            <person name="Chung E."/>
            <person name="Duncan M."/>
            <person name="Hunicke-Smith S."/>
            <person name="Hyman R.W."/>
            <person name="Komp C."/>
            <person name="Lashkari D."/>
            <person name="Lew H."/>
            <person name="Lin D."/>
            <person name="Mosedale D."/>
            <person name="Nakahara K."/>
            <person name="Namath A."/>
            <person name="Oefner P."/>
            <person name="Oh C."/>
            <person name="Petel F.X."/>
            <person name="Roberts D."/>
            <person name="Schramm S."/>
            <person name="Schroeder M."/>
            <person name="Shogren T."/>
            <person name="Shroff N."/>
            <person name="Winant A."/>
            <person name="Yelton M.A."/>
            <person name="Botstein D."/>
            <person name="Davis R.W."/>
            <person name="Johnston M."/>
            <person name="Andrews S."/>
            <person name="Brinkman R."/>
            <person name="Cooper J."/>
            <person name="Ding H."/>
            <person name="Du Z."/>
            <person name="Favello A."/>
            <person name="Fulton L."/>
            <person name="Gattung S."/>
            <person name="Greco T."/>
            <person name="Hallsworth K."/>
            <person name="Hawkins J."/>
            <person name="Hillier L.W."/>
            <person name="Jier M."/>
            <person name="Johnson D."/>
            <person name="Johnston L."/>
            <person name="Kirsten J."/>
            <person name="Kucaba T."/>
            <person name="Langston Y."/>
            <person name="Latreille P."/>
            <person name="Le T."/>
            <person name="Mardis E."/>
            <person name="Menezes S."/>
            <person name="Miller N."/>
            <person name="Nhan M."/>
            <person name="Pauley A."/>
            <person name="Peluso D."/>
            <person name="Rifkin L."/>
            <person name="Riles L."/>
            <person name="Taich A."/>
            <person name="Trevaskis E."/>
            <person name="Vignati D."/>
            <person name="Wilcox L."/>
            <person name="Wohldman P."/>
            <person name="Vaudin M."/>
            <person name="Wilson R."/>
            <person name="Waterston R."/>
            <person name="Albermann K."/>
            <person name="Hani J."/>
            <person name="Heumann K."/>
            <person name="Kleine K."/>
            <person name="Mewes H.-W."/>
            <person name="Zollner A."/>
            <person name="Zaccaria P."/>
        </authorList>
    </citation>
    <scope>NUCLEOTIDE SEQUENCE [LARGE SCALE GENOMIC DNA]</scope>
    <source>
        <strain>ATCC 204508 / S288c</strain>
    </source>
</reference>
<reference key="2">
    <citation type="journal article" date="2014" name="G3 (Bethesda)">
        <title>The reference genome sequence of Saccharomyces cerevisiae: Then and now.</title>
        <authorList>
            <person name="Engel S.R."/>
            <person name="Dietrich F.S."/>
            <person name="Fisk D.G."/>
            <person name="Binkley G."/>
            <person name="Balakrishnan R."/>
            <person name="Costanzo M.C."/>
            <person name="Dwight S.S."/>
            <person name="Hitz B.C."/>
            <person name="Karra K."/>
            <person name="Nash R.S."/>
            <person name="Weng S."/>
            <person name="Wong E.D."/>
            <person name="Lloyd P."/>
            <person name="Skrzypek M.S."/>
            <person name="Miyasato S.R."/>
            <person name="Simison M."/>
            <person name="Cherry J.M."/>
        </authorList>
    </citation>
    <scope>GENOME REANNOTATION</scope>
    <source>
        <strain>ATCC 204508 / S288c</strain>
    </source>
</reference>
<reference key="3">
    <citation type="journal article" date="2007" name="Genome Res.">
        <title>Approaching a complete repository of sequence-verified protein-encoding clones for Saccharomyces cerevisiae.</title>
        <authorList>
            <person name="Hu Y."/>
            <person name="Rolfs A."/>
            <person name="Bhullar B."/>
            <person name="Murthy T.V.S."/>
            <person name="Zhu C."/>
            <person name="Berger M.F."/>
            <person name="Camargo A.A."/>
            <person name="Kelley F."/>
            <person name="McCarron S."/>
            <person name="Jepson D."/>
            <person name="Richardson A."/>
            <person name="Raphael J."/>
            <person name="Moreira D."/>
            <person name="Taycher E."/>
            <person name="Zuo D."/>
            <person name="Mohr S."/>
            <person name="Kane M.F."/>
            <person name="Williamson J."/>
            <person name="Simpson A.J.G."/>
            <person name="Bulyk M.L."/>
            <person name="Harlow E."/>
            <person name="Marsischky G."/>
            <person name="Kolodner R.D."/>
            <person name="LaBaer J."/>
        </authorList>
    </citation>
    <scope>NUCLEOTIDE SEQUENCE [GENOMIC DNA]</scope>
    <source>
        <strain>ATCC 204508 / S288c</strain>
    </source>
</reference>
<reference key="4">
    <citation type="journal article" date="2000" name="Mol. Microbiol.">
        <title>The essential protein fap7 is involved in the oxidative stress response of Saccharomyces cerevisiae.</title>
        <authorList>
            <person name="Juhnke H."/>
            <person name="Charizanis C."/>
            <person name="Latifi F."/>
            <person name="Krems B."/>
            <person name="Entian K.-D."/>
        </authorList>
    </citation>
    <scope>FUNCTION</scope>
    <scope>SUBCELLULAR LOCATION</scope>
    <scope>MUTAGENESIS OF GLY-19 AND SER-21</scope>
</reference>
<reference key="5">
    <citation type="journal article" date="2003" name="Cell">
        <title>A panoramic view of yeast noncoding RNA processing.</title>
        <authorList>
            <person name="Peng W.-T."/>
            <person name="Robinson M.D."/>
            <person name="Mnaimneh S."/>
            <person name="Krogan N.J."/>
            <person name="Cagney G."/>
            <person name="Morris Q.D."/>
            <person name="Davierwala A.P."/>
            <person name="Grigull J."/>
            <person name="Yang X."/>
            <person name="Zhang W."/>
            <person name="Mitsakakis N."/>
            <person name="Ryan O.W."/>
            <person name="Datta N."/>
            <person name="Jojic V."/>
            <person name="Pal C."/>
            <person name="Canadien V."/>
            <person name="Richards D.P."/>
            <person name="Beattie B."/>
            <person name="Wu L.F."/>
            <person name="Altschuler S.J."/>
            <person name="Roweis S."/>
            <person name="Frey B.J."/>
            <person name="Emili A."/>
            <person name="Greenblatt J.F."/>
            <person name="Hughes T.R."/>
        </authorList>
    </citation>
    <scope>FUNCTION</scope>
</reference>
<reference key="6">
    <citation type="journal article" date="2003" name="Nature">
        <title>Global analysis of protein localization in budding yeast.</title>
        <authorList>
            <person name="Huh W.-K."/>
            <person name="Falvo J.V."/>
            <person name="Gerke L.C."/>
            <person name="Carroll A.S."/>
            <person name="Howson R.W."/>
            <person name="Weissman J.S."/>
            <person name="O'Shea E.K."/>
        </authorList>
    </citation>
    <scope>SUBCELLULAR LOCATION [LARGE SCALE ANALYSIS]</scope>
</reference>
<reference key="7">
    <citation type="journal article" date="2003" name="Nature">
        <title>Global analysis of protein expression in yeast.</title>
        <authorList>
            <person name="Ghaemmaghami S."/>
            <person name="Huh W.-K."/>
            <person name="Bower K."/>
            <person name="Howson R.W."/>
            <person name="Belle A."/>
            <person name="Dephoure N."/>
            <person name="O'Shea E.K."/>
            <person name="Weissman J.S."/>
        </authorList>
    </citation>
    <scope>LEVEL OF PROTEIN EXPRESSION [LARGE SCALE ANALYSIS]</scope>
</reference>
<reference key="8">
    <citation type="journal article" date="2005" name="Mol. Cell. Biol.">
        <title>The putative NTPase Fap7 mediates cytoplasmic 20S pre-rRNA processing through a direct interaction with Rps14.</title>
        <authorList>
            <person name="Granneman S."/>
            <person name="Nandineni M.R."/>
            <person name="Baserga S.J."/>
        </authorList>
    </citation>
    <scope>FUNCTION</scope>
    <scope>INTERACTION WITH RPS14B</scope>
    <scope>MUTAGENESIS OF LYS-20; ASP-82 AND HIS-84</scope>
</reference>
<reference key="9">
    <citation type="journal article" date="2008" name="Mol. Cell. Proteomics">
        <title>A multidimensional chromatography technology for in-depth phosphoproteome analysis.</title>
        <authorList>
            <person name="Albuquerque C.P."/>
            <person name="Smolka M.B."/>
            <person name="Payne S.H."/>
            <person name="Bafna V."/>
            <person name="Eng J."/>
            <person name="Zhou H."/>
        </authorList>
    </citation>
    <scope>PHOSPHORYLATION [LARGE SCALE ANALYSIS] AT SER-188 AND SER-196</scope>
    <scope>IDENTIFICATION BY MASS SPECTROMETRY [LARGE SCALE ANALYSIS]</scope>
</reference>
<reference key="10">
    <citation type="journal article" date="2009" name="Science">
        <title>Global analysis of Cdk1 substrate phosphorylation sites provides insights into evolution.</title>
        <authorList>
            <person name="Holt L.J."/>
            <person name="Tuch B.B."/>
            <person name="Villen J."/>
            <person name="Johnson A.D."/>
            <person name="Gygi S.P."/>
            <person name="Morgan D.O."/>
        </authorList>
    </citation>
    <scope>PHOSPHORYLATION [LARGE SCALE ANALYSIS] AT TYR-183; SER-188 AND SER-196</scope>
    <scope>IDENTIFICATION BY MASS SPECTROMETRY [LARGE SCALE ANALYSIS]</scope>
</reference>
<reference key="11">
    <citation type="journal article" date="2012" name="Cell">
        <title>A translation-like cycle is a quality control checkpoint for maturing 40S ribosome subunits.</title>
        <authorList>
            <person name="Strunk B.S."/>
            <person name="Novak M.N."/>
            <person name="Young C.L."/>
            <person name="Karbstein K."/>
        </authorList>
    </citation>
    <scope>FUNCTION</scope>
    <scope>MUTAGENESIS OF ASP-82 AND HIS-84</scope>
</reference>
<reference key="12">
    <citation type="journal article" date="2014" name="PLoS Biol.">
        <title>RNA mimicry by the Fap7 adenylate kinase in ribosome biogenesis.</title>
        <authorList>
            <person name="Loc'h J."/>
            <person name="Blaud M."/>
            <person name="Rety S."/>
            <person name="Lebaron S."/>
            <person name="Deschamps P."/>
            <person name="Bareille J."/>
            <person name="Jombart J."/>
            <person name="Robert-Paganin J."/>
            <person name="Delbos L."/>
            <person name="Chardon F."/>
            <person name="Zhang E."/>
            <person name="Charenton C."/>
            <person name="Tollervey D."/>
            <person name="Leulliot N."/>
        </authorList>
    </citation>
    <scope>FUNCTION</scope>
    <scope>CATALYTIC ACTIVITY</scope>
    <scope>BIOPHYSICOCHEMICAL PROPERTIES</scope>
</reference>
<reference key="13">
    <citation type="journal article" date="2017" name="Mol. Cell">
        <title>The ATPase Fap7 tests the ability to carry out translocation-like conformational changes and releases dim1 during 40S ribosome maturation.</title>
        <authorList>
            <person name="Ghalei H."/>
            <person name="Trepreau J."/>
            <person name="Collins J.C."/>
            <person name="Bhaskaran H."/>
            <person name="Strunk B.S."/>
            <person name="Karbstein K."/>
        </authorList>
    </citation>
    <scope>FUNCTION</scope>
</reference>
<reference key="14">
    <citation type="journal article" date="2017" name="Mol. Cell">
        <authorList>
            <person name="Ghalei H."/>
            <person name="Trepreau J."/>
            <person name="Collins J.C."/>
            <person name="Bhaskaran H."/>
            <person name="Strunk B.S."/>
            <person name="Karbstein K."/>
        </authorList>
    </citation>
    <scope>ERRATUM OF PUBMED:28890337</scope>
</reference>
<dbReference type="EC" id="2.7.4.3" evidence="1"/>
<dbReference type="EMBL" id="Z67750">
    <property type="protein sequence ID" value="CAA91580.1"/>
    <property type="molecule type" value="Genomic_DNA"/>
</dbReference>
<dbReference type="EMBL" id="Z74214">
    <property type="protein sequence ID" value="CAA98740.1"/>
    <property type="molecule type" value="Genomic_DNA"/>
</dbReference>
<dbReference type="EMBL" id="AY558568">
    <property type="protein sequence ID" value="AAS56894.1"/>
    <property type="molecule type" value="Genomic_DNA"/>
</dbReference>
<dbReference type="EMBL" id="BK006938">
    <property type="protein sequence ID" value="DAA11695.1"/>
    <property type="molecule type" value="Genomic_DNA"/>
</dbReference>
<dbReference type="PIR" id="S61047">
    <property type="entry name" value="S61047"/>
</dbReference>
<dbReference type="RefSeq" id="NP_010115.1">
    <property type="nucleotide sequence ID" value="NM_001180226.1"/>
</dbReference>
<dbReference type="SMR" id="Q12055"/>
<dbReference type="BioGRID" id="31899">
    <property type="interactions" value="60"/>
</dbReference>
<dbReference type="DIP" id="DIP-4793N"/>
<dbReference type="FunCoup" id="Q12055">
    <property type="interactions" value="987"/>
</dbReference>
<dbReference type="IntAct" id="Q12055">
    <property type="interactions" value="23"/>
</dbReference>
<dbReference type="STRING" id="4932.YDL166C"/>
<dbReference type="iPTMnet" id="Q12055"/>
<dbReference type="PaxDb" id="4932-YDL166C"/>
<dbReference type="PeptideAtlas" id="Q12055"/>
<dbReference type="EnsemblFungi" id="YDL166C_mRNA">
    <property type="protein sequence ID" value="YDL166C"/>
    <property type="gene ID" value="YDL166C"/>
</dbReference>
<dbReference type="GeneID" id="851388"/>
<dbReference type="KEGG" id="sce:YDL166C"/>
<dbReference type="AGR" id="SGD:S000002325"/>
<dbReference type="SGD" id="S000002325">
    <property type="gene designation" value="FAP7"/>
</dbReference>
<dbReference type="VEuPathDB" id="FungiDB:YDL166C"/>
<dbReference type="eggNOG" id="KOG3347">
    <property type="taxonomic scope" value="Eukaryota"/>
</dbReference>
<dbReference type="GeneTree" id="ENSGT00390000015930"/>
<dbReference type="HOGENOM" id="CLU_079096_3_0_1"/>
<dbReference type="InParanoid" id="Q12055"/>
<dbReference type="OMA" id="QCEIFGT"/>
<dbReference type="OrthoDB" id="10251185at2759"/>
<dbReference type="BioCyc" id="YEAST:G3O-29558-MONOMER"/>
<dbReference type="Reactome" id="R-SCE-499943">
    <property type="pathway name" value="Interconversion of nucleotide di- and triphosphates"/>
</dbReference>
<dbReference type="BioGRID-ORCS" id="851388">
    <property type="hits" value="8 hits in 10 CRISPR screens"/>
</dbReference>
<dbReference type="CD-CODE" id="E03F929F">
    <property type="entry name" value="Stress granule"/>
</dbReference>
<dbReference type="PRO" id="PR:Q12055"/>
<dbReference type="Proteomes" id="UP000002311">
    <property type="component" value="Chromosome IV"/>
</dbReference>
<dbReference type="RNAct" id="Q12055">
    <property type="molecule type" value="protein"/>
</dbReference>
<dbReference type="GO" id="GO:0005737">
    <property type="term" value="C:cytoplasm"/>
    <property type="evidence" value="ECO:0000315"/>
    <property type="project" value="SGD"/>
</dbReference>
<dbReference type="GO" id="GO:0010494">
    <property type="term" value="C:cytoplasmic stress granule"/>
    <property type="evidence" value="ECO:0007005"/>
    <property type="project" value="SGD"/>
</dbReference>
<dbReference type="GO" id="GO:0005634">
    <property type="term" value="C:nucleus"/>
    <property type="evidence" value="ECO:0000314"/>
    <property type="project" value="SGD"/>
</dbReference>
<dbReference type="GO" id="GO:0004017">
    <property type="term" value="F:adenylate kinase activity"/>
    <property type="evidence" value="ECO:0000314"/>
    <property type="project" value="SGD"/>
</dbReference>
<dbReference type="GO" id="GO:0005524">
    <property type="term" value="F:ATP binding"/>
    <property type="evidence" value="ECO:0000318"/>
    <property type="project" value="GO_Central"/>
</dbReference>
<dbReference type="GO" id="GO:0016887">
    <property type="term" value="F:ATP hydrolysis activity"/>
    <property type="evidence" value="ECO:0000314"/>
    <property type="project" value="SGD"/>
</dbReference>
<dbReference type="GO" id="GO:0034599">
    <property type="term" value="P:cellular response to oxidative stress"/>
    <property type="evidence" value="ECO:0000315"/>
    <property type="project" value="SGD"/>
</dbReference>
<dbReference type="GO" id="GO:0000462">
    <property type="term" value="P:maturation of SSU-rRNA from tricistronic rRNA transcript (SSU-rRNA, 5.8S rRNA, LSU-rRNA)"/>
    <property type="evidence" value="ECO:0000315"/>
    <property type="project" value="SGD"/>
</dbReference>
<dbReference type="FunFam" id="3.40.50.300:FF:000372">
    <property type="entry name" value="Adenylate kinase isoenzyme 6 homolog"/>
    <property type="match status" value="1"/>
</dbReference>
<dbReference type="Gene3D" id="3.40.50.300">
    <property type="entry name" value="P-loop containing nucleotide triphosphate hydrolases"/>
    <property type="match status" value="1"/>
</dbReference>
<dbReference type="HAMAP" id="MF_00039">
    <property type="entry name" value="Adenylate_kinase_AK6"/>
    <property type="match status" value="1"/>
</dbReference>
<dbReference type="InterPro" id="IPR020618">
    <property type="entry name" value="Adenyl_kinase_AK6"/>
</dbReference>
<dbReference type="InterPro" id="IPR027417">
    <property type="entry name" value="P-loop_NTPase"/>
</dbReference>
<dbReference type="PANTHER" id="PTHR12595:SF0">
    <property type="entry name" value="ADENYLATE KINASE ISOENZYME 6"/>
    <property type="match status" value="1"/>
</dbReference>
<dbReference type="PANTHER" id="PTHR12595">
    <property type="entry name" value="POS9-ACTIVATING FACTOR FAP7-RELATED"/>
    <property type="match status" value="1"/>
</dbReference>
<dbReference type="Pfam" id="PF13238">
    <property type="entry name" value="AAA_18"/>
    <property type="match status" value="1"/>
</dbReference>
<dbReference type="SUPFAM" id="SSF52540">
    <property type="entry name" value="P-loop containing nucleoside triphosphate hydrolases"/>
    <property type="match status" value="1"/>
</dbReference>
<proteinExistence type="evidence at protein level"/>
<feature type="chain" id="PRO_0000153902" description="Adenylate kinase isoenzyme 6 homolog FAP7">
    <location>
        <begin position="1"/>
        <end position="197"/>
    </location>
</feature>
<feature type="region of interest" description="NMPbind" evidence="1">
    <location>
        <begin position="38"/>
        <end position="61"/>
    </location>
</feature>
<feature type="region of interest" description="LID" evidence="1">
    <location>
        <begin position="113"/>
        <end position="123"/>
    </location>
</feature>
<feature type="region of interest" description="Disordered" evidence="2">
    <location>
        <begin position="176"/>
        <end position="197"/>
    </location>
</feature>
<feature type="binding site" evidence="1">
    <location>
        <position position="17"/>
    </location>
    <ligand>
        <name>ATP</name>
        <dbReference type="ChEBI" id="CHEBI:30616"/>
    </ligand>
</feature>
<feature type="binding site" evidence="1">
    <location>
        <position position="19"/>
    </location>
    <ligand>
        <name>ATP</name>
        <dbReference type="ChEBI" id="CHEBI:30616"/>
    </ligand>
</feature>
<feature type="binding site" evidence="1">
    <location>
        <position position="20"/>
    </location>
    <ligand>
        <name>ATP</name>
        <dbReference type="ChEBI" id="CHEBI:30616"/>
    </ligand>
</feature>
<feature type="binding site" evidence="1">
    <location>
        <position position="21"/>
    </location>
    <ligand>
        <name>ATP</name>
        <dbReference type="ChEBI" id="CHEBI:30616"/>
    </ligand>
</feature>
<feature type="binding site" evidence="1">
    <location>
        <position position="22"/>
    </location>
    <ligand>
        <name>ATP</name>
        <dbReference type="ChEBI" id="CHEBI:30616"/>
    </ligand>
</feature>
<feature type="binding site" evidence="1">
    <location>
        <position position="114"/>
    </location>
    <ligand>
        <name>ATP</name>
        <dbReference type="ChEBI" id="CHEBI:30616"/>
    </ligand>
</feature>
<feature type="modified residue" description="Phosphotyrosine" evidence="14">
    <location>
        <position position="183"/>
    </location>
</feature>
<feature type="modified residue" description="Phosphoserine" evidence="13 14">
    <location>
        <position position="188"/>
    </location>
</feature>
<feature type="modified residue" description="Phosphoserine" evidence="13 14">
    <location>
        <position position="196"/>
    </location>
</feature>
<feature type="mutagenesis site" description="Sensitive to hydrogen peroxide." evidence="3">
    <original>G</original>
    <variation>S</variation>
    <location>
        <position position="19"/>
    </location>
</feature>
<feature type="mutagenesis site" description="Decreases the processing of 20S rRNA." evidence="7">
    <original>K</original>
    <variation>R</variation>
    <location>
        <position position="20"/>
    </location>
</feature>
<feature type="mutagenesis site" description="Sensitive to hydrogen peroxide." evidence="3">
    <original>S</original>
    <variation>G</variation>
    <location>
        <position position="21"/>
    </location>
</feature>
<feature type="mutagenesis site" description="Decreases the processing of 20S rRNA; when associated with A-84." evidence="7 8">
    <original>D</original>
    <variation>A</variation>
    <location>
        <position position="82"/>
    </location>
</feature>
<feature type="mutagenesis site" description="Decreases the processing of 20S rRNA; when associated with A-82." evidence="7 8">
    <original>H</original>
    <variation>A</variation>
    <location>
        <position position="84"/>
    </location>
</feature>
<feature type="sequence conflict" description="In Ref. 3; AAS56894." evidence="12" ref="3">
    <original>I</original>
    <variation>V</variation>
    <location>
        <position position="80"/>
    </location>
</feature>
<evidence type="ECO:0000255" key="1">
    <source>
        <dbReference type="HAMAP-Rule" id="MF_03173"/>
    </source>
</evidence>
<evidence type="ECO:0000256" key="2">
    <source>
        <dbReference type="SAM" id="MobiDB-lite"/>
    </source>
</evidence>
<evidence type="ECO:0000269" key="3">
    <source>
    </source>
</evidence>
<evidence type="ECO:0000269" key="4">
    <source>
    </source>
</evidence>
<evidence type="ECO:0000269" key="5">
    <source>
    </source>
</evidence>
<evidence type="ECO:0000269" key="6">
    <source>
    </source>
</evidence>
<evidence type="ECO:0000269" key="7">
    <source>
    </source>
</evidence>
<evidence type="ECO:0000269" key="8">
    <source>
    </source>
</evidence>
<evidence type="ECO:0000269" key="9">
    <source>
    </source>
</evidence>
<evidence type="ECO:0000269" key="10">
    <source>
    </source>
</evidence>
<evidence type="ECO:0000303" key="11">
    <source>
    </source>
</evidence>
<evidence type="ECO:0000305" key="12"/>
<evidence type="ECO:0007744" key="13">
    <source>
    </source>
</evidence>
<evidence type="ECO:0007744" key="14">
    <source>
    </source>
</evidence>
<organism>
    <name type="scientific">Saccharomyces cerevisiae (strain ATCC 204508 / S288c)</name>
    <name type="common">Baker's yeast</name>
    <dbReference type="NCBI Taxonomy" id="559292"/>
    <lineage>
        <taxon>Eukaryota</taxon>
        <taxon>Fungi</taxon>
        <taxon>Dikarya</taxon>
        <taxon>Ascomycota</taxon>
        <taxon>Saccharomycotina</taxon>
        <taxon>Saccharomycetes</taxon>
        <taxon>Saccharomycetales</taxon>
        <taxon>Saccharomycetaceae</taxon>
        <taxon>Saccharomyces</taxon>
    </lineage>
</organism>
<accession>Q12055</accession>
<accession>D6VRI5</accession>
<accession>E9P8W4</accession>
<comment type="function">
    <text evidence="1 3 4 7 8 9 10">Broad-specificity nucleoside monophosphate (NMP) kinase that catalyzes the reversible transfer of the terminal phosphate group between nucleoside triphosphates and monophosphates. Also has ATPase activity (PubMed:24823650). Involved in the late cytoplasmic maturation steps of the 40S ribosomal particles, specifically 18S rRNA maturation. Required for cleavage of the 20S pre-rRNA at site D in the cytoplasm (PubMed:12837249, PubMed:16287850, PubMed:22770215). While NMP activity is not required for ribosome maturation, ATPase activity is. Associates transiently with small ribosomal subunit protein uS11. ATP hydrolysis breaks the interaction with uS11. May temporarily remove uS11 from the ribosome to enable a conformational change of the ribosomal RNA that is needed for the final maturation step of the small ribosomal subunit (PubMed:24823650). Promotes formation of the rotated state in 80S-like ribosomes, a key intermediate in translocation, thereby releasing the essential assembly factor DIM1 from pre-40S subunits (PubMed:28890337). Its NMP activity may have a role in nuclear energy homeostasis (PubMed:24823650). Involved in oxidative stress response. Required for POS9-dependent target gene transcription upon oxidative stress (PubMed:10692169).</text>
</comment>
<comment type="catalytic activity">
    <reaction evidence="1 9">
        <text>AMP + ATP = 2 ADP</text>
        <dbReference type="Rhea" id="RHEA:12973"/>
        <dbReference type="ChEBI" id="CHEBI:30616"/>
        <dbReference type="ChEBI" id="CHEBI:456215"/>
        <dbReference type="ChEBI" id="CHEBI:456216"/>
        <dbReference type="EC" id="2.7.4.3"/>
    </reaction>
</comment>
<comment type="catalytic activity">
    <reaction evidence="1 8 9">
        <text>ATP + H2O = ADP + phosphate + H(+)</text>
        <dbReference type="Rhea" id="RHEA:13065"/>
        <dbReference type="ChEBI" id="CHEBI:15377"/>
        <dbReference type="ChEBI" id="CHEBI:15378"/>
        <dbReference type="ChEBI" id="CHEBI:30616"/>
        <dbReference type="ChEBI" id="CHEBI:43474"/>
        <dbReference type="ChEBI" id="CHEBI:456216"/>
    </reaction>
</comment>
<comment type="biophysicochemical properties">
    <kinetics>
        <KM evidence="9">52 uM for ATP (for adenylate kinase activity)</KM>
        <text evidence="9">kcat is 0.00612 sec(-1) for adenylate kinase activity.</text>
    </kinetics>
</comment>
<comment type="subunit">
    <text evidence="1 7">Interacts with small ribosomal subunit protein uS11B/RPS14B (PubMed:16287850). Not a structural component of 43S pre-ribosomes, but transiently interacts with them by binding to uS11/RPS14 (PubMed:16287850).</text>
</comment>
<comment type="subcellular location">
    <subcellularLocation>
        <location evidence="1 5">Cytoplasm</location>
    </subcellularLocation>
    <subcellularLocation>
        <location evidence="1 3 5">Nucleus</location>
    </subcellularLocation>
</comment>
<comment type="miscellaneous">
    <text evidence="6">Present with 8350 molecules/cell in log phase SD medium.</text>
</comment>
<comment type="similarity">
    <text evidence="1">Belongs to the adenylate kinase family. AK6 subfamily.</text>
</comment>
<name>KAD6_YEAST</name>